<organism>
    <name type="scientific">Herminiimonas arsenicoxydans</name>
    <dbReference type="NCBI Taxonomy" id="204773"/>
    <lineage>
        <taxon>Bacteria</taxon>
        <taxon>Pseudomonadati</taxon>
        <taxon>Pseudomonadota</taxon>
        <taxon>Betaproteobacteria</taxon>
        <taxon>Burkholderiales</taxon>
        <taxon>Oxalobacteraceae</taxon>
        <taxon>Herminiimonas</taxon>
    </lineage>
</organism>
<accession>A4G6R4</accession>
<dbReference type="EC" id="2.7.8.7" evidence="1"/>
<dbReference type="EMBL" id="CU207211">
    <property type="protein sequence ID" value="CAL62201.1"/>
    <property type="molecule type" value="Genomic_DNA"/>
</dbReference>
<dbReference type="SMR" id="A4G6R4"/>
<dbReference type="STRING" id="204773.HEAR2059"/>
<dbReference type="KEGG" id="har:HEAR2059"/>
<dbReference type="eggNOG" id="COG0736">
    <property type="taxonomic scope" value="Bacteria"/>
</dbReference>
<dbReference type="HOGENOM" id="CLU_089696_3_1_4"/>
<dbReference type="OrthoDB" id="517356at2"/>
<dbReference type="Proteomes" id="UP000006697">
    <property type="component" value="Chromosome"/>
</dbReference>
<dbReference type="GO" id="GO:0005737">
    <property type="term" value="C:cytoplasm"/>
    <property type="evidence" value="ECO:0007669"/>
    <property type="project" value="UniProtKB-SubCell"/>
</dbReference>
<dbReference type="GO" id="GO:0008897">
    <property type="term" value="F:holo-[acyl-carrier-protein] synthase activity"/>
    <property type="evidence" value="ECO:0007669"/>
    <property type="project" value="UniProtKB-UniRule"/>
</dbReference>
<dbReference type="GO" id="GO:0000287">
    <property type="term" value="F:magnesium ion binding"/>
    <property type="evidence" value="ECO:0007669"/>
    <property type="project" value="UniProtKB-UniRule"/>
</dbReference>
<dbReference type="GO" id="GO:0006633">
    <property type="term" value="P:fatty acid biosynthetic process"/>
    <property type="evidence" value="ECO:0007669"/>
    <property type="project" value="UniProtKB-UniRule"/>
</dbReference>
<dbReference type="Gene3D" id="3.90.470.20">
    <property type="entry name" value="4'-phosphopantetheinyl transferase domain"/>
    <property type="match status" value="1"/>
</dbReference>
<dbReference type="HAMAP" id="MF_00101">
    <property type="entry name" value="AcpS"/>
    <property type="match status" value="1"/>
</dbReference>
<dbReference type="InterPro" id="IPR008278">
    <property type="entry name" value="4-PPantetheinyl_Trfase_dom"/>
</dbReference>
<dbReference type="InterPro" id="IPR037143">
    <property type="entry name" value="4-PPantetheinyl_Trfase_dom_sf"/>
</dbReference>
<dbReference type="InterPro" id="IPR002582">
    <property type="entry name" value="ACPS"/>
</dbReference>
<dbReference type="InterPro" id="IPR004568">
    <property type="entry name" value="Ppantetheine-prot_Trfase_dom"/>
</dbReference>
<dbReference type="NCBIfam" id="TIGR00516">
    <property type="entry name" value="acpS"/>
    <property type="match status" value="1"/>
</dbReference>
<dbReference type="NCBIfam" id="TIGR00556">
    <property type="entry name" value="pantethn_trn"/>
    <property type="match status" value="1"/>
</dbReference>
<dbReference type="Pfam" id="PF01648">
    <property type="entry name" value="ACPS"/>
    <property type="match status" value="1"/>
</dbReference>
<dbReference type="SUPFAM" id="SSF56214">
    <property type="entry name" value="4'-phosphopantetheinyl transferase"/>
    <property type="match status" value="1"/>
</dbReference>
<protein>
    <recommendedName>
        <fullName evidence="1">Holo-[acyl-carrier-protein] synthase</fullName>
        <shortName evidence="1">Holo-ACP synthase</shortName>
        <ecNumber evidence="1">2.7.8.7</ecNumber>
    </recommendedName>
    <alternativeName>
        <fullName evidence="1">4'-phosphopantetheinyl transferase AcpS</fullName>
    </alternativeName>
</protein>
<feature type="chain" id="PRO_1000075641" description="Holo-[acyl-carrier-protein] synthase">
    <location>
        <begin position="1"/>
        <end position="130"/>
    </location>
</feature>
<feature type="binding site" evidence="1">
    <location>
        <position position="8"/>
    </location>
    <ligand>
        <name>Mg(2+)</name>
        <dbReference type="ChEBI" id="CHEBI:18420"/>
    </ligand>
</feature>
<feature type="binding site" evidence="1">
    <location>
        <position position="62"/>
    </location>
    <ligand>
        <name>Mg(2+)</name>
        <dbReference type="ChEBI" id="CHEBI:18420"/>
    </ligand>
</feature>
<name>ACPS_HERAR</name>
<reference key="1">
    <citation type="journal article" date="2007" name="PLoS Genet.">
        <title>A tale of two oxidation states: bacterial colonization of arsenic-rich environments.</title>
        <authorList>
            <person name="Muller D."/>
            <person name="Medigue C."/>
            <person name="Koechler S."/>
            <person name="Barbe V."/>
            <person name="Barakat M."/>
            <person name="Talla E."/>
            <person name="Bonnefoy V."/>
            <person name="Krin E."/>
            <person name="Arsene-Ploetze F."/>
            <person name="Carapito C."/>
            <person name="Chandler M."/>
            <person name="Cournoyer B."/>
            <person name="Cruveiller S."/>
            <person name="Dossat C."/>
            <person name="Duval S."/>
            <person name="Heymann M."/>
            <person name="Leize E."/>
            <person name="Lieutaud A."/>
            <person name="Lievremont D."/>
            <person name="Makita Y."/>
            <person name="Mangenot S."/>
            <person name="Nitschke W."/>
            <person name="Ortet P."/>
            <person name="Perdrial N."/>
            <person name="Schoepp B."/>
            <person name="Siguier P."/>
            <person name="Simeonova D.D."/>
            <person name="Rouy Z."/>
            <person name="Segurens B."/>
            <person name="Turlin E."/>
            <person name="Vallenet D."/>
            <person name="van Dorsselaer A."/>
            <person name="Weiss S."/>
            <person name="Weissenbach J."/>
            <person name="Lett M.-C."/>
            <person name="Danchin A."/>
            <person name="Bertin P.N."/>
        </authorList>
    </citation>
    <scope>NUCLEOTIDE SEQUENCE [LARGE SCALE GENOMIC DNA]</scope>
    <source>
        <strain>ULPAs1</strain>
    </source>
</reference>
<comment type="function">
    <text evidence="1">Transfers the 4'-phosphopantetheine moiety from coenzyme A to a Ser of acyl-carrier-protein.</text>
</comment>
<comment type="catalytic activity">
    <reaction evidence="1">
        <text>apo-[ACP] + CoA = holo-[ACP] + adenosine 3',5'-bisphosphate + H(+)</text>
        <dbReference type="Rhea" id="RHEA:12068"/>
        <dbReference type="Rhea" id="RHEA-COMP:9685"/>
        <dbReference type="Rhea" id="RHEA-COMP:9690"/>
        <dbReference type="ChEBI" id="CHEBI:15378"/>
        <dbReference type="ChEBI" id="CHEBI:29999"/>
        <dbReference type="ChEBI" id="CHEBI:57287"/>
        <dbReference type="ChEBI" id="CHEBI:58343"/>
        <dbReference type="ChEBI" id="CHEBI:64479"/>
        <dbReference type="EC" id="2.7.8.7"/>
    </reaction>
</comment>
<comment type="cofactor">
    <cofactor evidence="1">
        <name>Mg(2+)</name>
        <dbReference type="ChEBI" id="CHEBI:18420"/>
    </cofactor>
</comment>
<comment type="subcellular location">
    <subcellularLocation>
        <location evidence="1">Cytoplasm</location>
    </subcellularLocation>
</comment>
<comment type="similarity">
    <text evidence="1">Belongs to the P-Pant transferase superfamily. AcpS family.</text>
</comment>
<proteinExistence type="inferred from homology"/>
<sequence length="130" mass="14345">MIYGIGTDIIKIARIEAALGRHGDRFAERVLGVEELEKYHRRKAKVAARGLRFLATRFAAKEAFSKAIGLGMHMPMTWRAAQILNAPSGQPIVVTSGKLAEFMQENGLTAQVSITDEVEYAVAFVIVEKK</sequence>
<keyword id="KW-0963">Cytoplasm</keyword>
<keyword id="KW-0275">Fatty acid biosynthesis</keyword>
<keyword id="KW-0276">Fatty acid metabolism</keyword>
<keyword id="KW-0444">Lipid biosynthesis</keyword>
<keyword id="KW-0443">Lipid metabolism</keyword>
<keyword id="KW-0460">Magnesium</keyword>
<keyword id="KW-0479">Metal-binding</keyword>
<keyword id="KW-1185">Reference proteome</keyword>
<keyword id="KW-0808">Transferase</keyword>
<evidence type="ECO:0000255" key="1">
    <source>
        <dbReference type="HAMAP-Rule" id="MF_00101"/>
    </source>
</evidence>
<gene>
    <name evidence="1" type="primary">acpS</name>
    <name type="ordered locus">HEAR2059</name>
</gene>